<evidence type="ECO:0000255" key="1">
    <source>
        <dbReference type="PROSITE-ProRule" id="PRU00319"/>
    </source>
</evidence>
<organism>
    <name type="scientific">Bacillus subtilis (strain 168)</name>
    <dbReference type="NCBI Taxonomy" id="224308"/>
    <lineage>
        <taxon>Bacteria</taxon>
        <taxon>Bacillati</taxon>
        <taxon>Bacillota</taxon>
        <taxon>Bacilli</taxon>
        <taxon>Bacillales</taxon>
        <taxon>Bacillaceae</taxon>
        <taxon>Bacillus</taxon>
    </lineage>
</organism>
<accession>O05236</accession>
<accession>Q798I8</accession>
<dbReference type="EMBL" id="Z93934">
    <property type="protein sequence ID" value="CAB07919.1"/>
    <property type="molecule type" value="Genomic_DNA"/>
</dbReference>
<dbReference type="EMBL" id="AL009126">
    <property type="protein sequence ID" value="CAB15130.1"/>
    <property type="molecule type" value="Genomic_DNA"/>
</dbReference>
<dbReference type="PIR" id="F70010">
    <property type="entry name" value="F70010"/>
</dbReference>
<dbReference type="RefSeq" id="NP_391019.1">
    <property type="nucleotide sequence ID" value="NC_000964.3"/>
</dbReference>
<dbReference type="RefSeq" id="WP_009968070.1">
    <property type="nucleotide sequence ID" value="NZ_OZ025638.1"/>
</dbReference>
<dbReference type="SMR" id="O05236"/>
<dbReference type="FunCoup" id="O05236">
    <property type="interactions" value="12"/>
</dbReference>
<dbReference type="STRING" id="224308.BSU31410"/>
<dbReference type="PaxDb" id="224308-BSU31410"/>
<dbReference type="EnsemblBacteria" id="CAB15130">
    <property type="protein sequence ID" value="CAB15130"/>
    <property type="gene ID" value="BSU_31410"/>
</dbReference>
<dbReference type="GeneID" id="937166"/>
<dbReference type="KEGG" id="bsu:BSU31410"/>
<dbReference type="PATRIC" id="fig|224308.179.peg.3405"/>
<dbReference type="eggNOG" id="COG1522">
    <property type="taxonomic scope" value="Bacteria"/>
</dbReference>
<dbReference type="InParanoid" id="O05236"/>
<dbReference type="OrthoDB" id="66249at2"/>
<dbReference type="BioCyc" id="BSUB:BSU31410-MONOMER"/>
<dbReference type="Proteomes" id="UP000001570">
    <property type="component" value="Chromosome"/>
</dbReference>
<dbReference type="GO" id="GO:0043565">
    <property type="term" value="F:sequence-specific DNA binding"/>
    <property type="evidence" value="ECO:0007669"/>
    <property type="project" value="InterPro"/>
</dbReference>
<dbReference type="Gene3D" id="3.30.70.920">
    <property type="match status" value="1"/>
</dbReference>
<dbReference type="Gene3D" id="1.10.10.10">
    <property type="entry name" value="Winged helix-like DNA-binding domain superfamily/Winged helix DNA-binding domain"/>
    <property type="match status" value="1"/>
</dbReference>
<dbReference type="InterPro" id="IPR000485">
    <property type="entry name" value="AsnC-type_HTH_dom"/>
</dbReference>
<dbReference type="InterPro" id="IPR011008">
    <property type="entry name" value="Dimeric_a/b-barrel"/>
</dbReference>
<dbReference type="InterPro" id="IPR050684">
    <property type="entry name" value="HTH-Siroheme_Decarb"/>
</dbReference>
<dbReference type="InterPro" id="IPR019888">
    <property type="entry name" value="Tscrpt_reg_AsnC-like"/>
</dbReference>
<dbReference type="InterPro" id="IPR019887">
    <property type="entry name" value="Tscrpt_reg_AsnC/Lrp_C"/>
</dbReference>
<dbReference type="InterPro" id="IPR036388">
    <property type="entry name" value="WH-like_DNA-bd_sf"/>
</dbReference>
<dbReference type="InterPro" id="IPR036390">
    <property type="entry name" value="WH_DNA-bd_sf"/>
</dbReference>
<dbReference type="PANTHER" id="PTHR43413:SF7">
    <property type="entry name" value="HTH-TYPE TRANSCRIPTIONAL REGULATOR PTR2"/>
    <property type="match status" value="1"/>
</dbReference>
<dbReference type="PANTHER" id="PTHR43413">
    <property type="entry name" value="TRANSCRIPTIONAL REGULATOR, ASNC FAMILY"/>
    <property type="match status" value="1"/>
</dbReference>
<dbReference type="Pfam" id="PF01037">
    <property type="entry name" value="AsnC_trans_reg"/>
    <property type="match status" value="1"/>
</dbReference>
<dbReference type="Pfam" id="PF13412">
    <property type="entry name" value="HTH_24"/>
    <property type="match status" value="1"/>
</dbReference>
<dbReference type="SMART" id="SM00344">
    <property type="entry name" value="HTH_ASNC"/>
    <property type="match status" value="1"/>
</dbReference>
<dbReference type="SUPFAM" id="SSF54909">
    <property type="entry name" value="Dimeric alpha+beta barrel"/>
    <property type="match status" value="1"/>
</dbReference>
<dbReference type="SUPFAM" id="SSF46785">
    <property type="entry name" value="Winged helix' DNA-binding domain"/>
    <property type="match status" value="1"/>
</dbReference>
<dbReference type="PROSITE" id="PS50956">
    <property type="entry name" value="HTH_ASNC_2"/>
    <property type="match status" value="1"/>
</dbReference>
<reference key="1">
    <citation type="journal article" date="1997" name="Microbiology">
        <title>Analysis of the Bacillus subtilis genome: cloning and nucleotide sequence of a 62 kb region between 275 degrees (rrnB) and 284 degrees (pai).</title>
        <authorList>
            <person name="Oudega B."/>
            <person name="Koningstein G."/>
            <person name="Rodrigues L."/>
            <person name="de Sales Ramon M."/>
            <person name="Hilbert H."/>
            <person name="Duesterhoeft A."/>
            <person name="Pohl T.M."/>
            <person name="Weitzenegger T."/>
        </authorList>
    </citation>
    <scope>NUCLEOTIDE SEQUENCE [GENOMIC DNA]</scope>
    <source>
        <strain>168</strain>
    </source>
</reference>
<reference key="2">
    <citation type="journal article" date="1997" name="Nature">
        <title>The complete genome sequence of the Gram-positive bacterium Bacillus subtilis.</title>
        <authorList>
            <person name="Kunst F."/>
            <person name="Ogasawara N."/>
            <person name="Moszer I."/>
            <person name="Albertini A.M."/>
            <person name="Alloni G."/>
            <person name="Azevedo V."/>
            <person name="Bertero M.G."/>
            <person name="Bessieres P."/>
            <person name="Bolotin A."/>
            <person name="Borchert S."/>
            <person name="Borriss R."/>
            <person name="Boursier L."/>
            <person name="Brans A."/>
            <person name="Braun M."/>
            <person name="Brignell S.C."/>
            <person name="Bron S."/>
            <person name="Brouillet S."/>
            <person name="Bruschi C.V."/>
            <person name="Caldwell B."/>
            <person name="Capuano V."/>
            <person name="Carter N.M."/>
            <person name="Choi S.-K."/>
            <person name="Codani J.-J."/>
            <person name="Connerton I.F."/>
            <person name="Cummings N.J."/>
            <person name="Daniel R.A."/>
            <person name="Denizot F."/>
            <person name="Devine K.M."/>
            <person name="Duesterhoeft A."/>
            <person name="Ehrlich S.D."/>
            <person name="Emmerson P.T."/>
            <person name="Entian K.-D."/>
            <person name="Errington J."/>
            <person name="Fabret C."/>
            <person name="Ferrari E."/>
            <person name="Foulger D."/>
            <person name="Fritz C."/>
            <person name="Fujita M."/>
            <person name="Fujita Y."/>
            <person name="Fuma S."/>
            <person name="Galizzi A."/>
            <person name="Galleron N."/>
            <person name="Ghim S.-Y."/>
            <person name="Glaser P."/>
            <person name="Goffeau A."/>
            <person name="Golightly E.J."/>
            <person name="Grandi G."/>
            <person name="Guiseppi G."/>
            <person name="Guy B.J."/>
            <person name="Haga K."/>
            <person name="Haiech J."/>
            <person name="Harwood C.R."/>
            <person name="Henaut A."/>
            <person name="Hilbert H."/>
            <person name="Holsappel S."/>
            <person name="Hosono S."/>
            <person name="Hullo M.-F."/>
            <person name="Itaya M."/>
            <person name="Jones L.-M."/>
            <person name="Joris B."/>
            <person name="Karamata D."/>
            <person name="Kasahara Y."/>
            <person name="Klaerr-Blanchard M."/>
            <person name="Klein C."/>
            <person name="Kobayashi Y."/>
            <person name="Koetter P."/>
            <person name="Koningstein G."/>
            <person name="Krogh S."/>
            <person name="Kumano M."/>
            <person name="Kurita K."/>
            <person name="Lapidus A."/>
            <person name="Lardinois S."/>
            <person name="Lauber J."/>
            <person name="Lazarevic V."/>
            <person name="Lee S.-M."/>
            <person name="Levine A."/>
            <person name="Liu H."/>
            <person name="Masuda S."/>
            <person name="Mauel C."/>
            <person name="Medigue C."/>
            <person name="Medina N."/>
            <person name="Mellado R.P."/>
            <person name="Mizuno M."/>
            <person name="Moestl D."/>
            <person name="Nakai S."/>
            <person name="Noback M."/>
            <person name="Noone D."/>
            <person name="O'Reilly M."/>
            <person name="Ogawa K."/>
            <person name="Ogiwara A."/>
            <person name="Oudega B."/>
            <person name="Park S.-H."/>
            <person name="Parro V."/>
            <person name="Pohl T.M."/>
            <person name="Portetelle D."/>
            <person name="Porwollik S."/>
            <person name="Prescott A.M."/>
            <person name="Presecan E."/>
            <person name="Pujic P."/>
            <person name="Purnelle B."/>
            <person name="Rapoport G."/>
            <person name="Rey M."/>
            <person name="Reynolds S."/>
            <person name="Rieger M."/>
            <person name="Rivolta C."/>
            <person name="Rocha E."/>
            <person name="Roche B."/>
            <person name="Rose M."/>
            <person name="Sadaie Y."/>
            <person name="Sato T."/>
            <person name="Scanlan E."/>
            <person name="Schleich S."/>
            <person name="Schroeter R."/>
            <person name="Scoffone F."/>
            <person name="Sekiguchi J."/>
            <person name="Sekowska A."/>
            <person name="Seror S.J."/>
            <person name="Serror P."/>
            <person name="Shin B.-S."/>
            <person name="Soldo B."/>
            <person name="Sorokin A."/>
            <person name="Tacconi E."/>
            <person name="Takagi T."/>
            <person name="Takahashi H."/>
            <person name="Takemaru K."/>
            <person name="Takeuchi M."/>
            <person name="Tamakoshi A."/>
            <person name="Tanaka T."/>
            <person name="Terpstra P."/>
            <person name="Tognoni A."/>
            <person name="Tosato V."/>
            <person name="Uchiyama S."/>
            <person name="Vandenbol M."/>
            <person name="Vannier F."/>
            <person name="Vassarotti A."/>
            <person name="Viari A."/>
            <person name="Wambutt R."/>
            <person name="Wedler E."/>
            <person name="Wedler H."/>
            <person name="Weitzenegger T."/>
            <person name="Winters P."/>
            <person name="Wipat A."/>
            <person name="Yamamoto H."/>
            <person name="Yamane K."/>
            <person name="Yasumoto K."/>
            <person name="Yata K."/>
            <person name="Yoshida K."/>
            <person name="Yoshikawa H.-F."/>
            <person name="Zumstein E."/>
            <person name="Yoshikawa H."/>
            <person name="Danchin A."/>
        </authorList>
    </citation>
    <scope>NUCLEOTIDE SEQUENCE [LARGE SCALE GENOMIC DNA]</scope>
    <source>
        <strain>168</strain>
    </source>
</reference>
<sequence>MKLTEKETEILEILDENSRADLETIAKMAGIPVNEVKTIIDKLEKEKVIIDYSAMIDWRKVDGHEGVTAMIDVKVTPKRGVGFDEVAERIYRFQEVESVYLMSGVYDLSVVIRGNSMSDVARFVSDKLSTLDSVVSTTTHFILKKYKHDGKVFETGDDDKRIVVSP</sequence>
<gene>
    <name type="primary">yugG</name>
    <name type="ordered locus">BSU31410</name>
</gene>
<feature type="chain" id="PRO_0000383636" description="Uncharacterized HTH-type transcriptional regulator YugG">
    <location>
        <begin position="1"/>
        <end position="166"/>
    </location>
</feature>
<feature type="domain" description="HTH asnC-type" evidence="1">
    <location>
        <begin position="3"/>
        <end position="65"/>
    </location>
</feature>
<feature type="DNA-binding region" description="H-T-H motif" evidence="1">
    <location>
        <begin position="22"/>
        <end position="41"/>
    </location>
</feature>
<proteinExistence type="predicted"/>
<name>YUGG_BACSU</name>
<keyword id="KW-0238">DNA-binding</keyword>
<keyword id="KW-1185">Reference proteome</keyword>
<keyword id="KW-0804">Transcription</keyword>
<keyword id="KW-0805">Transcription regulation</keyword>
<protein>
    <recommendedName>
        <fullName>Uncharacterized HTH-type transcriptional regulator YugG</fullName>
    </recommendedName>
</protein>